<name>Y5813_ARATH</name>
<comment type="function">
    <text evidence="1">May act as a substrate-specific adapter of an E3 ubiquitin-protein ligase complex (CUL3-RBX1-BTB) which mediates the ubiquitination and subsequent proteasomal degradation of target proteins.</text>
</comment>
<comment type="pathway">
    <text>Protein modification; protein ubiquitination.</text>
</comment>
<comment type="domain">
    <text evidence="5">The BTB/POZ domain mediates the interaction with some component of ubiquitin ligase complexes.</text>
</comment>
<comment type="similarity">
    <text evidence="3">Belongs to the NPH3 family.</text>
</comment>
<comment type="sequence caution" evidence="6">
    <conflict type="miscellaneous discrepancy">
        <sequence resource="EMBL" id="BX832348"/>
    </conflict>
    <text>Sequencing errors.</text>
</comment>
<gene>
    <name type="ordered locus">At5g48130</name>
    <name type="ORF">MIF21.2</name>
</gene>
<keyword id="KW-1185">Reference proteome</keyword>
<keyword id="KW-0833">Ubl conjugation pathway</keyword>
<evidence type="ECO:0000250" key="1"/>
<evidence type="ECO:0000255" key="2">
    <source>
        <dbReference type="PROSITE-ProRule" id="PRU00037"/>
    </source>
</evidence>
<evidence type="ECO:0000255" key="3">
    <source>
        <dbReference type="PROSITE-ProRule" id="PRU00982"/>
    </source>
</evidence>
<evidence type="ECO:0000256" key="4">
    <source>
        <dbReference type="SAM" id="MobiDB-lite"/>
    </source>
</evidence>
<evidence type="ECO:0000269" key="5">
    <source>
    </source>
</evidence>
<evidence type="ECO:0000305" key="6"/>
<sequence>METFSLKDCSSVASSPISSPNISTLLKIKVLSWSKETGLPASVHVRVCNKSFNLHKSLLCAKSGYFKEREDQLSEIEIPQEFPGGAETFEKIMLFIYGCPTLIHPFNIAGLRCAAQFLEMTEQHSTGNLCERFDLYLNQVVLQNWDDTLVVLKKCQDLVPWSEDLLIVSRCIESLAFTACMEILDPERRREKPVIMLEGMVNQPWEYTNIERIINQDTWIKDLTDLPFEFFKKIIGSLRRQGMKERYVSPLVALYASKSVIPEGQTNTDILQRALDLLLTRDKAYRFVPVGFYFACLAHNLKHDTVLKLQDQIVSLLHTAQPENFIYPKAGNRQVAFSQELLTMESLFSVYVSTESERHLTSSSSNVRVGKLWDIFLSRLPYDQEMKTTRFIELIETVPMSFRESHDQLYLAVNAFLQVHTNISQEEKGSICSYLNCQKLSQEASLELVKNEKMPLRLVVQALFIQQLNTHQAFKDCSDSFRFTNSADFSGSVVPSSRPLTSQQSPCTDDETGPRNRPLCFLMQKDATLDEFESTSFRIHNLEEQLVSLKKSLHSHDNLKKPNCLGKRSASRNKNTFGQVTTACIGSVSFTSQRKYANRLLQILRRVNLFGSRKTNRSKAGESER</sequence>
<reference key="1">
    <citation type="journal article" date="2000" name="DNA Res.">
        <title>Structural analysis of Arabidopsis thaliana chromosome 5. X. Sequence features of the regions of 3,076,755 bp covered by sixty P1 and TAC clones.</title>
        <authorList>
            <person name="Sato S."/>
            <person name="Nakamura Y."/>
            <person name="Kaneko T."/>
            <person name="Katoh T."/>
            <person name="Asamizu E."/>
            <person name="Kotani H."/>
            <person name="Tabata S."/>
        </authorList>
    </citation>
    <scope>NUCLEOTIDE SEQUENCE [LARGE SCALE GENOMIC DNA]</scope>
    <source>
        <strain>cv. Columbia</strain>
    </source>
</reference>
<reference key="2">
    <citation type="journal article" date="2017" name="Plant J.">
        <title>Araport11: a complete reannotation of the Arabidopsis thaliana reference genome.</title>
        <authorList>
            <person name="Cheng C.Y."/>
            <person name="Krishnakumar V."/>
            <person name="Chan A.P."/>
            <person name="Thibaud-Nissen F."/>
            <person name="Schobel S."/>
            <person name="Town C.D."/>
        </authorList>
    </citation>
    <scope>GENOME REANNOTATION</scope>
    <source>
        <strain>cv. Columbia</strain>
    </source>
</reference>
<reference key="3">
    <citation type="journal article" date="2004" name="Genome Res.">
        <title>Whole genome sequence comparisons and 'full-length' cDNA sequences: a combined approach to evaluate and improve Arabidopsis genome annotation.</title>
        <authorList>
            <person name="Castelli V."/>
            <person name="Aury J.-M."/>
            <person name="Jaillon O."/>
            <person name="Wincker P."/>
            <person name="Clepet C."/>
            <person name="Menard M."/>
            <person name="Cruaud C."/>
            <person name="Quetier F."/>
            <person name="Scarpelli C."/>
            <person name="Schaechter V."/>
            <person name="Temple G."/>
            <person name="Caboche M."/>
            <person name="Weissenbach J."/>
            <person name="Salanoubat M."/>
        </authorList>
    </citation>
    <scope>NUCLEOTIDE SEQUENCE [LARGE SCALE MRNA]</scope>
    <source>
        <strain>cv. Columbia</strain>
    </source>
</reference>
<reference key="4">
    <citation type="journal article" date="2005" name="J. Biol. Chem.">
        <title>Cullins 3a and 3b assemble with members of the broad complex/tramtrack/bric-a-brac (BTB) protein family to form essential ubiquitin-protein ligases (E3s) in Arabidopsis.</title>
        <authorList>
            <person name="Gingerich D.J."/>
            <person name="Gagne J.M."/>
            <person name="Salter D.W."/>
            <person name="Hellmann H."/>
            <person name="Estelle M."/>
            <person name="Ma L."/>
            <person name="Vierstra R.D."/>
        </authorList>
    </citation>
    <scope>DOMAIN BTB</scope>
</reference>
<proteinExistence type="evidence at transcript level"/>
<accession>Q9LUB9</accession>
<protein>
    <recommendedName>
        <fullName>BTB/POZ domain-containing protein At5g48130</fullName>
    </recommendedName>
</protein>
<organism>
    <name type="scientific">Arabidopsis thaliana</name>
    <name type="common">Mouse-ear cress</name>
    <dbReference type="NCBI Taxonomy" id="3702"/>
    <lineage>
        <taxon>Eukaryota</taxon>
        <taxon>Viridiplantae</taxon>
        <taxon>Streptophyta</taxon>
        <taxon>Embryophyta</taxon>
        <taxon>Tracheophyta</taxon>
        <taxon>Spermatophyta</taxon>
        <taxon>Magnoliopsida</taxon>
        <taxon>eudicotyledons</taxon>
        <taxon>Gunneridae</taxon>
        <taxon>Pentapetalae</taxon>
        <taxon>rosids</taxon>
        <taxon>malvids</taxon>
        <taxon>Brassicales</taxon>
        <taxon>Brassicaceae</taxon>
        <taxon>Camelineae</taxon>
        <taxon>Arabidopsis</taxon>
    </lineage>
</organism>
<feature type="chain" id="PRO_0000409586" description="BTB/POZ domain-containing protein At5g48130">
    <location>
        <begin position="1"/>
        <end position="625"/>
    </location>
</feature>
<feature type="domain" description="BTB" evidence="2">
    <location>
        <begin position="41"/>
        <end position="105"/>
    </location>
</feature>
<feature type="domain" description="NPH3" evidence="3">
    <location>
        <begin position="217"/>
        <end position="469"/>
    </location>
</feature>
<feature type="region of interest" description="Disordered" evidence="4">
    <location>
        <begin position="494"/>
        <end position="513"/>
    </location>
</feature>
<feature type="compositionally biased region" description="Polar residues" evidence="4">
    <location>
        <begin position="494"/>
        <end position="507"/>
    </location>
</feature>
<dbReference type="EMBL" id="AB023039">
    <property type="protein sequence ID" value="BAA96993.1"/>
    <property type="molecule type" value="Genomic_DNA"/>
</dbReference>
<dbReference type="EMBL" id="CP002688">
    <property type="protein sequence ID" value="AED95622.1"/>
    <property type="molecule type" value="Genomic_DNA"/>
</dbReference>
<dbReference type="EMBL" id="BX832348">
    <property type="status" value="NOT_ANNOTATED_CDS"/>
    <property type="molecule type" value="mRNA"/>
</dbReference>
<dbReference type="RefSeq" id="NP_199624.1">
    <property type="nucleotide sequence ID" value="NM_124187.2"/>
</dbReference>
<dbReference type="SMR" id="Q9LUB9"/>
<dbReference type="FunCoup" id="Q9LUB9">
    <property type="interactions" value="6"/>
</dbReference>
<dbReference type="STRING" id="3702.Q9LUB9"/>
<dbReference type="PaxDb" id="3702-AT5G48130.1"/>
<dbReference type="EnsemblPlants" id="AT5G48130.1">
    <property type="protein sequence ID" value="AT5G48130.1"/>
    <property type="gene ID" value="AT5G48130"/>
</dbReference>
<dbReference type="GeneID" id="834865"/>
<dbReference type="Gramene" id="AT5G48130.1">
    <property type="protein sequence ID" value="AT5G48130.1"/>
    <property type="gene ID" value="AT5G48130"/>
</dbReference>
<dbReference type="KEGG" id="ath:AT5G48130"/>
<dbReference type="Araport" id="AT5G48130"/>
<dbReference type="TAIR" id="AT5G48130"/>
<dbReference type="eggNOG" id="ENOG502QQT1">
    <property type="taxonomic scope" value="Eukaryota"/>
</dbReference>
<dbReference type="HOGENOM" id="CLU_005994_5_1_1"/>
<dbReference type="InParanoid" id="Q9LUB9"/>
<dbReference type="OMA" id="NFASQRK"/>
<dbReference type="PhylomeDB" id="Q9LUB9"/>
<dbReference type="UniPathway" id="UPA00143"/>
<dbReference type="PRO" id="PR:Q9LUB9"/>
<dbReference type="Proteomes" id="UP000006548">
    <property type="component" value="Chromosome 5"/>
</dbReference>
<dbReference type="ExpressionAtlas" id="Q9LUB9">
    <property type="expression patterns" value="baseline and differential"/>
</dbReference>
<dbReference type="GO" id="GO:0016567">
    <property type="term" value="P:protein ubiquitination"/>
    <property type="evidence" value="ECO:0007669"/>
    <property type="project" value="UniProtKB-UniPathway"/>
</dbReference>
<dbReference type="CDD" id="cd18312">
    <property type="entry name" value="BTB_POZ_NPY3-like"/>
    <property type="match status" value="1"/>
</dbReference>
<dbReference type="Gene3D" id="3.30.710.10">
    <property type="entry name" value="Potassium Channel Kv1.1, Chain A"/>
    <property type="match status" value="1"/>
</dbReference>
<dbReference type="InterPro" id="IPR000210">
    <property type="entry name" value="BTB/POZ_dom"/>
</dbReference>
<dbReference type="InterPro" id="IPR043454">
    <property type="entry name" value="NPH3/RPT2-like"/>
</dbReference>
<dbReference type="InterPro" id="IPR027356">
    <property type="entry name" value="NPH3_dom"/>
</dbReference>
<dbReference type="InterPro" id="IPR011333">
    <property type="entry name" value="SKP1/BTB/POZ_sf"/>
</dbReference>
<dbReference type="PANTHER" id="PTHR32370">
    <property type="entry name" value="OS12G0117600 PROTEIN"/>
    <property type="match status" value="1"/>
</dbReference>
<dbReference type="Pfam" id="PF00651">
    <property type="entry name" value="BTB"/>
    <property type="match status" value="1"/>
</dbReference>
<dbReference type="Pfam" id="PF03000">
    <property type="entry name" value="NPH3"/>
    <property type="match status" value="1"/>
</dbReference>
<dbReference type="SMART" id="SM00225">
    <property type="entry name" value="BTB"/>
    <property type="match status" value="1"/>
</dbReference>
<dbReference type="SUPFAM" id="SSF54695">
    <property type="entry name" value="POZ domain"/>
    <property type="match status" value="1"/>
</dbReference>
<dbReference type="PROSITE" id="PS50097">
    <property type="entry name" value="BTB"/>
    <property type="match status" value="1"/>
</dbReference>
<dbReference type="PROSITE" id="PS51649">
    <property type="entry name" value="NPH3"/>
    <property type="match status" value="1"/>
</dbReference>